<comment type="function">
    <text evidence="1">DNA repair enzyme that is part of the base excision repair (BER) pathway; protects from oxidative damage by removing the major product of DNA oxidation, 8-oxoguanine (GO), from single- and double-stranded DNA substrates.</text>
</comment>
<comment type="catalytic activity">
    <reaction evidence="1">
        <text>2'-deoxyribonucleotide-(2'-deoxyribose 5'-phosphate)-2'-deoxyribonucleotide-DNA = a 3'-end 2'-deoxyribonucleotide-(2,3-dehydro-2,3-deoxyribose 5'-phosphate)-DNA + a 5'-end 5'-phospho-2'-deoxyribonucleoside-DNA + H(+)</text>
        <dbReference type="Rhea" id="RHEA:66592"/>
        <dbReference type="Rhea" id="RHEA-COMP:13180"/>
        <dbReference type="Rhea" id="RHEA-COMP:16897"/>
        <dbReference type="Rhea" id="RHEA-COMP:17067"/>
        <dbReference type="ChEBI" id="CHEBI:15378"/>
        <dbReference type="ChEBI" id="CHEBI:136412"/>
        <dbReference type="ChEBI" id="CHEBI:157695"/>
        <dbReference type="ChEBI" id="CHEBI:167181"/>
        <dbReference type="EC" id="4.2.99.18"/>
    </reaction>
</comment>
<comment type="domain">
    <text>Contains two alpha-helical subdomains, with the 8-oxoguanine binding site located in a cleft at their interface. Contains a helix-hairpin-helix (HhH) structural motif and a Gly/Pro-rich sequence followed by a conserved Asp (HhH-GPD motif).</text>
</comment>
<comment type="similarity">
    <text evidence="1">Belongs to the archaeal N-glycosylase/DNA lyase (AGOG) family.</text>
</comment>
<proteinExistence type="inferred from homology"/>
<sequence>MAQRVRWERVERVAEAFSRLSIGEVLGFEEQVDPQYKLVSRLAGEIGAGKAALSALLVGLASYRLAMRGEEWWLCFYRHMRSSLPRAEGLRGVLRAVEGFLTSCSGAAIGREAKLRRVRRAASAAEVLGEVLDNPLVLVERPSEVLEALRVALGEKGFRKTTVFSVKIAYYAVRPLAGRKPLTLDVPIPVDVRVACASISSEMVEAPSYREVVARPEAAQRAWGRVARSSGIPVLHIDSILWVTGWAPRELPPGEAREAVAGILSRALDRGKAVLLASELVRRPCPGG</sequence>
<name>AGOG_AERPE</name>
<gene>
    <name type="ordered locus">APE_0710.1</name>
</gene>
<dbReference type="EC" id="3.2.2.-" evidence="1"/>
<dbReference type="EC" id="4.2.99.18" evidence="1"/>
<dbReference type="EMBL" id="BA000002">
    <property type="protein sequence ID" value="BAA79686.2"/>
    <property type="molecule type" value="Genomic_DNA"/>
</dbReference>
<dbReference type="PIR" id="F72660">
    <property type="entry name" value="F72660"/>
</dbReference>
<dbReference type="RefSeq" id="WP_010865919.1">
    <property type="nucleotide sequence ID" value="NC_000854.2"/>
</dbReference>
<dbReference type="SMR" id="Q9YE60"/>
<dbReference type="STRING" id="272557.APE_0710.1"/>
<dbReference type="EnsemblBacteria" id="BAA79686">
    <property type="protein sequence ID" value="BAA79686"/>
    <property type="gene ID" value="APE_0710.1"/>
</dbReference>
<dbReference type="GeneID" id="1444838"/>
<dbReference type="KEGG" id="ape:APE_0710.1"/>
<dbReference type="eggNOG" id="arCOG04144">
    <property type="taxonomic scope" value="Archaea"/>
</dbReference>
<dbReference type="Proteomes" id="UP000002518">
    <property type="component" value="Chromosome"/>
</dbReference>
<dbReference type="GO" id="GO:0140078">
    <property type="term" value="F:class I DNA-(apurinic or apyrimidinic site) endonuclease activity"/>
    <property type="evidence" value="ECO:0007669"/>
    <property type="project" value="UniProtKB-EC"/>
</dbReference>
<dbReference type="GO" id="GO:0000702">
    <property type="term" value="F:oxidized base lesion DNA N-glycosylase activity"/>
    <property type="evidence" value="ECO:0007669"/>
    <property type="project" value="UniProtKB-UniRule"/>
</dbReference>
<dbReference type="GO" id="GO:0006284">
    <property type="term" value="P:base-excision repair"/>
    <property type="evidence" value="ECO:0007669"/>
    <property type="project" value="UniProtKB-UniRule"/>
</dbReference>
<dbReference type="Gene3D" id="1.10.1670.10">
    <property type="entry name" value="Helix-hairpin-Helix base-excision DNA repair enzymes (C-terminal)"/>
    <property type="match status" value="1"/>
</dbReference>
<dbReference type="Gene3D" id="1.10.340.30">
    <property type="entry name" value="Hypothetical protein, domain 2"/>
    <property type="match status" value="1"/>
</dbReference>
<dbReference type="HAMAP" id="MF_01168">
    <property type="entry name" value="AGOG"/>
    <property type="match status" value="1"/>
</dbReference>
<dbReference type="InterPro" id="IPR016544">
    <property type="entry name" value="AGOG"/>
</dbReference>
<dbReference type="InterPro" id="IPR015254">
    <property type="entry name" value="AGOG-like"/>
</dbReference>
<dbReference type="InterPro" id="IPR011257">
    <property type="entry name" value="DNA_glycosylase"/>
</dbReference>
<dbReference type="InterPro" id="IPR023170">
    <property type="entry name" value="HhH_base_excis_C"/>
</dbReference>
<dbReference type="NCBIfam" id="NF009787">
    <property type="entry name" value="PRK13280.2-1"/>
    <property type="match status" value="1"/>
</dbReference>
<dbReference type="Pfam" id="PF09171">
    <property type="entry name" value="AGOG"/>
    <property type="match status" value="1"/>
</dbReference>
<dbReference type="PIRSF" id="PIRSF008955">
    <property type="entry name" value="AGOG"/>
    <property type="match status" value="1"/>
</dbReference>
<dbReference type="SUPFAM" id="SSF48150">
    <property type="entry name" value="DNA-glycosylase"/>
    <property type="match status" value="1"/>
</dbReference>
<evidence type="ECO:0000255" key="1">
    <source>
        <dbReference type="HAMAP-Rule" id="MF_01168"/>
    </source>
</evidence>
<accession>Q9YE60</accession>
<keyword id="KW-0227">DNA damage</keyword>
<keyword id="KW-0228">DNA excision</keyword>
<keyword id="KW-0234">DNA repair</keyword>
<keyword id="KW-0378">Hydrolase</keyword>
<keyword id="KW-0456">Lyase</keyword>
<keyword id="KW-1185">Reference proteome</keyword>
<feature type="chain" id="PRO_0000185108" description="N-glycosylase/DNA lyase">
    <location>
        <begin position="1"/>
        <end position="288"/>
    </location>
</feature>
<feature type="region of interest" description="Helix-hairpin-helix">
    <location>
        <begin position="134"/>
        <end position="203"/>
    </location>
</feature>
<feature type="active site" description="Schiff-base intermediate with DNA" evidence="1">
    <location>
        <position position="160"/>
    </location>
</feature>
<feature type="active site" evidence="1">
    <location>
        <position position="191"/>
    </location>
</feature>
<feature type="binding site" evidence="1">
    <location>
        <position position="35"/>
    </location>
    <ligand>
        <name>8-oxoguanine</name>
        <dbReference type="ChEBI" id="CHEBI:52617"/>
    </ligand>
</feature>
<feature type="binding site" evidence="1">
    <location>
        <position position="62"/>
    </location>
    <ligand>
        <name>8-oxoguanine</name>
        <dbReference type="ChEBI" id="CHEBI:52617"/>
    </ligand>
</feature>
<feature type="binding site" evidence="1">
    <location>
        <position position="73"/>
    </location>
    <ligand>
        <name>8-oxoguanine</name>
        <dbReference type="ChEBI" id="CHEBI:52617"/>
    </ligand>
</feature>
<feature type="binding site" evidence="1">
    <location>
        <position position="164"/>
    </location>
    <ligand>
        <name>8-oxoguanine</name>
        <dbReference type="ChEBI" id="CHEBI:52617"/>
    </ligand>
</feature>
<feature type="binding site" evidence="1">
    <location>
        <position position="189"/>
    </location>
    <ligand>
        <name>8-oxoguanine</name>
        <dbReference type="ChEBI" id="CHEBI:52617"/>
    </ligand>
</feature>
<feature type="binding site" evidence="1">
    <location>
        <position position="238"/>
    </location>
    <ligand>
        <name>8-oxoguanine</name>
        <dbReference type="ChEBI" id="CHEBI:52617"/>
    </ligand>
</feature>
<feature type="binding site" evidence="1">
    <location>
        <position position="242"/>
    </location>
    <ligand>
        <name>8-oxoguanine</name>
        <dbReference type="ChEBI" id="CHEBI:52617"/>
    </ligand>
</feature>
<reference key="1">
    <citation type="journal article" date="1999" name="DNA Res.">
        <title>Complete genome sequence of an aerobic hyper-thermophilic crenarchaeon, Aeropyrum pernix K1.</title>
        <authorList>
            <person name="Kawarabayasi Y."/>
            <person name="Hino Y."/>
            <person name="Horikawa H."/>
            <person name="Yamazaki S."/>
            <person name="Haikawa Y."/>
            <person name="Jin-no K."/>
            <person name="Takahashi M."/>
            <person name="Sekine M."/>
            <person name="Baba S."/>
            <person name="Ankai A."/>
            <person name="Kosugi H."/>
            <person name="Hosoyama A."/>
            <person name="Fukui S."/>
            <person name="Nagai Y."/>
            <person name="Nishijima K."/>
            <person name="Nakazawa H."/>
            <person name="Takamiya M."/>
            <person name="Masuda S."/>
            <person name="Funahashi T."/>
            <person name="Tanaka T."/>
            <person name="Kudoh Y."/>
            <person name="Yamazaki J."/>
            <person name="Kushida N."/>
            <person name="Oguchi A."/>
            <person name="Aoki K."/>
            <person name="Kubota K."/>
            <person name="Nakamura Y."/>
            <person name="Nomura N."/>
            <person name="Sako Y."/>
            <person name="Kikuchi H."/>
        </authorList>
    </citation>
    <scope>NUCLEOTIDE SEQUENCE [LARGE SCALE GENOMIC DNA]</scope>
    <source>
        <strain>ATCC 700893 / DSM 11879 / JCM 9820 / NBRC 100138 / K1</strain>
    </source>
</reference>
<protein>
    <recommendedName>
        <fullName evidence="1">N-glycosylase/DNA lyase</fullName>
    </recommendedName>
    <alternativeName>
        <fullName evidence="1">8-oxoguanine DNA glycosylase</fullName>
        <ecNumber evidence="1">3.2.2.-</ecNumber>
    </alternativeName>
    <alternativeName>
        <fullName evidence="1">AGOG</fullName>
    </alternativeName>
    <alternativeName>
        <fullName evidence="1">DNA-(apurinic or apyrimidinic site) lyase</fullName>
        <shortName evidence="1">AP lyase</shortName>
        <ecNumber evidence="1">4.2.99.18</ecNumber>
    </alternativeName>
</protein>
<organism>
    <name type="scientific">Aeropyrum pernix (strain ATCC 700893 / DSM 11879 / JCM 9820 / NBRC 100138 / K1)</name>
    <dbReference type="NCBI Taxonomy" id="272557"/>
    <lineage>
        <taxon>Archaea</taxon>
        <taxon>Thermoproteota</taxon>
        <taxon>Thermoprotei</taxon>
        <taxon>Desulfurococcales</taxon>
        <taxon>Desulfurococcaceae</taxon>
        <taxon>Aeropyrum</taxon>
    </lineage>
</organism>